<feature type="chain" id="PRO_0000358304" description="NAD(P)H-quinone oxidoreductase subunit J, chloroplastic">
    <location>
        <begin position="1"/>
        <end position="158"/>
    </location>
</feature>
<reference key="1">
    <citation type="journal article" date="2006" name="Theor. Appl. Genet.">
        <title>Complete chloroplast genome sequences of Solanum bulbocastanum, Solanum lycopersicum and comparative analyses with other Solanaceae genomes.</title>
        <authorList>
            <person name="Daniell H."/>
            <person name="Lee S.-B."/>
            <person name="Grevich J."/>
            <person name="Saski C."/>
            <person name="Quesada-Vargas T."/>
            <person name="Guda C."/>
            <person name="Tomkins J."/>
            <person name="Jansen R.K."/>
        </authorList>
    </citation>
    <scope>NUCLEOTIDE SEQUENCE [LARGE SCALE GENOMIC DNA]</scope>
    <source>
        <strain>cv. PT29</strain>
    </source>
</reference>
<sequence length="158" mass="18623">MQGRLSAWLVKHGLIHRSLGFDYQGIETLQIKPEDWHSIAVIFYVYGYNYLRSQCAYDVAPGGLLASVYHLTRIEDGVDQPEELCIKVFASRRNPRIPSVFWVWKSVDFQERESYDMLGISYDNHPRLKRILMPESWIGWPLRKDYIAPNFYEIQEAH</sequence>
<evidence type="ECO:0000255" key="1">
    <source>
        <dbReference type="HAMAP-Rule" id="MF_01357"/>
    </source>
</evidence>
<keyword id="KW-0150">Chloroplast</keyword>
<keyword id="KW-0472">Membrane</keyword>
<keyword id="KW-0520">NAD</keyword>
<keyword id="KW-0521">NADP</keyword>
<keyword id="KW-0934">Plastid</keyword>
<keyword id="KW-0618">Plastoquinone</keyword>
<keyword id="KW-0874">Quinone</keyword>
<keyword id="KW-0793">Thylakoid</keyword>
<keyword id="KW-1278">Translocase</keyword>
<keyword id="KW-0813">Transport</keyword>
<gene>
    <name evidence="1" type="primary">ndhJ</name>
</gene>
<dbReference type="EC" id="7.1.1.-" evidence="1"/>
<dbReference type="EMBL" id="DQ347958">
    <property type="protein sequence ID" value="ABC56216.1"/>
    <property type="molecule type" value="Genomic_DNA"/>
</dbReference>
<dbReference type="RefSeq" id="YP_538851.1">
    <property type="nucleotide sequence ID" value="NC_007943.1"/>
</dbReference>
<dbReference type="SMR" id="Q2MII4"/>
<dbReference type="GeneID" id="3989508"/>
<dbReference type="GO" id="GO:0009535">
    <property type="term" value="C:chloroplast thylakoid membrane"/>
    <property type="evidence" value="ECO:0007669"/>
    <property type="project" value="UniProtKB-SubCell"/>
</dbReference>
<dbReference type="GO" id="GO:0008137">
    <property type="term" value="F:NADH dehydrogenase (ubiquinone) activity"/>
    <property type="evidence" value="ECO:0007669"/>
    <property type="project" value="InterPro"/>
</dbReference>
<dbReference type="GO" id="GO:0048038">
    <property type="term" value="F:quinone binding"/>
    <property type="evidence" value="ECO:0007669"/>
    <property type="project" value="UniProtKB-KW"/>
</dbReference>
<dbReference type="GO" id="GO:0019684">
    <property type="term" value="P:photosynthesis, light reaction"/>
    <property type="evidence" value="ECO:0007669"/>
    <property type="project" value="UniProtKB-UniRule"/>
</dbReference>
<dbReference type="FunFam" id="3.30.460.80:FF:000004">
    <property type="entry name" value="NAD(P)H-quinone oxidoreductase subunit J, chloroplastic"/>
    <property type="match status" value="1"/>
</dbReference>
<dbReference type="Gene3D" id="3.30.460.80">
    <property type="entry name" value="NADH:ubiquinone oxidoreductase, 30kDa subunit"/>
    <property type="match status" value="1"/>
</dbReference>
<dbReference type="HAMAP" id="MF_01357">
    <property type="entry name" value="NDH1_NuoC"/>
    <property type="match status" value="1"/>
</dbReference>
<dbReference type="InterPro" id="IPR010218">
    <property type="entry name" value="NADH_DH_suC"/>
</dbReference>
<dbReference type="InterPro" id="IPR037232">
    <property type="entry name" value="NADH_quin_OxRdtase_su_C/D-like"/>
</dbReference>
<dbReference type="InterPro" id="IPR001268">
    <property type="entry name" value="NADH_UbQ_OxRdtase_30kDa_su"/>
</dbReference>
<dbReference type="InterPro" id="IPR020396">
    <property type="entry name" value="NADH_UbQ_OxRdtase_CS"/>
</dbReference>
<dbReference type="NCBIfam" id="NF009141">
    <property type="entry name" value="PRK12494.1"/>
    <property type="match status" value="1"/>
</dbReference>
<dbReference type="PANTHER" id="PTHR10884:SF14">
    <property type="entry name" value="NADH DEHYDROGENASE [UBIQUINONE] IRON-SULFUR PROTEIN 3, MITOCHONDRIAL"/>
    <property type="match status" value="1"/>
</dbReference>
<dbReference type="PANTHER" id="PTHR10884">
    <property type="entry name" value="NADH DEHYDROGENASE UBIQUINONE IRON-SULFUR PROTEIN 3"/>
    <property type="match status" value="1"/>
</dbReference>
<dbReference type="Pfam" id="PF00329">
    <property type="entry name" value="Complex1_30kDa"/>
    <property type="match status" value="1"/>
</dbReference>
<dbReference type="SUPFAM" id="SSF143243">
    <property type="entry name" value="Nqo5-like"/>
    <property type="match status" value="1"/>
</dbReference>
<dbReference type="PROSITE" id="PS00542">
    <property type="entry name" value="COMPLEX1_30K"/>
    <property type="match status" value="1"/>
</dbReference>
<geneLocation type="chloroplast"/>
<accession>Q2MII4</accession>
<name>NDHJ_SOLBU</name>
<organism>
    <name type="scientific">Solanum bulbocastanum</name>
    <name type="common">Wild potato</name>
    <dbReference type="NCBI Taxonomy" id="147425"/>
    <lineage>
        <taxon>Eukaryota</taxon>
        <taxon>Viridiplantae</taxon>
        <taxon>Streptophyta</taxon>
        <taxon>Embryophyta</taxon>
        <taxon>Tracheophyta</taxon>
        <taxon>Spermatophyta</taxon>
        <taxon>Magnoliopsida</taxon>
        <taxon>eudicotyledons</taxon>
        <taxon>Gunneridae</taxon>
        <taxon>Pentapetalae</taxon>
        <taxon>asterids</taxon>
        <taxon>lamiids</taxon>
        <taxon>Solanales</taxon>
        <taxon>Solanaceae</taxon>
        <taxon>Solanoideae</taxon>
        <taxon>Solaneae</taxon>
        <taxon>Solanum</taxon>
    </lineage>
</organism>
<protein>
    <recommendedName>
        <fullName evidence="1">NAD(P)H-quinone oxidoreductase subunit J, chloroplastic</fullName>
        <ecNumber evidence="1">7.1.1.-</ecNumber>
    </recommendedName>
    <alternativeName>
        <fullName>NAD(P)H dehydrogenase subunit J</fullName>
    </alternativeName>
    <alternativeName>
        <fullName evidence="1">NADH-plastoquinone oxidoreductase subunit J</fullName>
    </alternativeName>
</protein>
<proteinExistence type="inferred from homology"/>
<comment type="function">
    <text evidence="1">NDH shuttles electrons from NAD(P)H:plastoquinone, via FMN and iron-sulfur (Fe-S) centers, to quinones in the photosynthetic chain and possibly in a chloroplast respiratory chain. The immediate electron acceptor for the enzyme in this species is believed to be plastoquinone. Couples the redox reaction to proton translocation, and thus conserves the redox energy in a proton gradient.</text>
</comment>
<comment type="catalytic activity">
    <reaction evidence="1">
        <text>a plastoquinone + NADH + (n+1) H(+)(in) = a plastoquinol + NAD(+) + n H(+)(out)</text>
        <dbReference type="Rhea" id="RHEA:42608"/>
        <dbReference type="Rhea" id="RHEA-COMP:9561"/>
        <dbReference type="Rhea" id="RHEA-COMP:9562"/>
        <dbReference type="ChEBI" id="CHEBI:15378"/>
        <dbReference type="ChEBI" id="CHEBI:17757"/>
        <dbReference type="ChEBI" id="CHEBI:57540"/>
        <dbReference type="ChEBI" id="CHEBI:57945"/>
        <dbReference type="ChEBI" id="CHEBI:62192"/>
    </reaction>
</comment>
<comment type="catalytic activity">
    <reaction evidence="1">
        <text>a plastoquinone + NADPH + (n+1) H(+)(in) = a plastoquinol + NADP(+) + n H(+)(out)</text>
        <dbReference type="Rhea" id="RHEA:42612"/>
        <dbReference type="Rhea" id="RHEA-COMP:9561"/>
        <dbReference type="Rhea" id="RHEA-COMP:9562"/>
        <dbReference type="ChEBI" id="CHEBI:15378"/>
        <dbReference type="ChEBI" id="CHEBI:17757"/>
        <dbReference type="ChEBI" id="CHEBI:57783"/>
        <dbReference type="ChEBI" id="CHEBI:58349"/>
        <dbReference type="ChEBI" id="CHEBI:62192"/>
    </reaction>
</comment>
<comment type="subunit">
    <text evidence="1">NDH is composed of at least 16 different subunits, 5 of which are encoded in the nucleus.</text>
</comment>
<comment type="subcellular location">
    <subcellularLocation>
        <location evidence="1">Plastid</location>
        <location evidence="1">Chloroplast thylakoid membrane</location>
        <topology evidence="1">Peripheral membrane protein</topology>
        <orientation evidence="1">Stromal side</orientation>
    </subcellularLocation>
</comment>
<comment type="similarity">
    <text evidence="1">Belongs to the complex I 30 kDa subunit family.</text>
</comment>